<gene>
    <name evidence="1" type="primary">thiG</name>
    <name type="ordered locus">SG3446</name>
</gene>
<comment type="function">
    <text evidence="1">Catalyzes the rearrangement of 1-deoxy-D-xylulose 5-phosphate (DXP) to produce the thiazole phosphate moiety of thiamine. Sulfur is provided by the thiocarboxylate moiety of the carrier protein ThiS. In vitro, sulfur can be provided by H(2)S.</text>
</comment>
<comment type="catalytic activity">
    <reaction evidence="1">
        <text>[ThiS sulfur-carrier protein]-C-terminal-Gly-aminoethanethioate + 2-iminoacetate + 1-deoxy-D-xylulose 5-phosphate = [ThiS sulfur-carrier protein]-C-terminal Gly-Gly + 2-[(2R,5Z)-2-carboxy-4-methylthiazol-5(2H)-ylidene]ethyl phosphate + 2 H2O + H(+)</text>
        <dbReference type="Rhea" id="RHEA:26297"/>
        <dbReference type="Rhea" id="RHEA-COMP:12909"/>
        <dbReference type="Rhea" id="RHEA-COMP:19908"/>
        <dbReference type="ChEBI" id="CHEBI:15377"/>
        <dbReference type="ChEBI" id="CHEBI:15378"/>
        <dbReference type="ChEBI" id="CHEBI:57792"/>
        <dbReference type="ChEBI" id="CHEBI:62899"/>
        <dbReference type="ChEBI" id="CHEBI:77846"/>
        <dbReference type="ChEBI" id="CHEBI:90778"/>
        <dbReference type="ChEBI" id="CHEBI:232372"/>
        <dbReference type="EC" id="2.8.1.10"/>
    </reaction>
</comment>
<comment type="pathway">
    <text evidence="1">Cofactor biosynthesis; thiamine diphosphate biosynthesis.</text>
</comment>
<comment type="subunit">
    <text evidence="1">Homotetramer. Forms heterodimers with either ThiH or ThiS.</text>
</comment>
<comment type="subcellular location">
    <subcellularLocation>
        <location evidence="1">Cytoplasm</location>
    </subcellularLocation>
</comment>
<comment type="similarity">
    <text evidence="1">Belongs to the ThiG family.</text>
</comment>
<sequence length="256" mass="26832">MLRIADKTFDSHLFTGTGKFASSQLMVEAIRASGSQLVTLAMKRVDLRQHNDAILAPLIEAGVTLLPNTSGAKTAEEAIFAAQLAREALGTNWLKLEIHPDARWLLPDPIETLKAAEALVKQGFVVLPYCGADPVLCKRLEEVGCAAVMPLGAPIGSNQGLETKTMLEIIIQQATVPVVVDAGIGVPSHAAQALEMGADAVLVNTAIAVADDPVMMATAFRLAVEAGLLARQAVPGNRSTYASATSPLTGFLEALA</sequence>
<reference key="1">
    <citation type="journal article" date="2008" name="Genome Res.">
        <title>Comparative genome analysis of Salmonella enteritidis PT4 and Salmonella gallinarum 287/91 provides insights into evolutionary and host adaptation pathways.</title>
        <authorList>
            <person name="Thomson N.R."/>
            <person name="Clayton D.J."/>
            <person name="Windhorst D."/>
            <person name="Vernikos G."/>
            <person name="Davidson S."/>
            <person name="Churcher C."/>
            <person name="Quail M.A."/>
            <person name="Stevens M."/>
            <person name="Jones M.A."/>
            <person name="Watson M."/>
            <person name="Barron A."/>
            <person name="Layton A."/>
            <person name="Pickard D."/>
            <person name="Kingsley R.A."/>
            <person name="Bignell A."/>
            <person name="Clark L."/>
            <person name="Harris B."/>
            <person name="Ormond D."/>
            <person name="Abdellah Z."/>
            <person name="Brooks K."/>
            <person name="Cherevach I."/>
            <person name="Chillingworth T."/>
            <person name="Woodward J."/>
            <person name="Norberczak H."/>
            <person name="Lord A."/>
            <person name="Arrowsmith C."/>
            <person name="Jagels K."/>
            <person name="Moule S."/>
            <person name="Mungall K."/>
            <person name="Saunders M."/>
            <person name="Whitehead S."/>
            <person name="Chabalgoity J.A."/>
            <person name="Maskell D."/>
            <person name="Humphreys T."/>
            <person name="Roberts M."/>
            <person name="Barrow P.A."/>
            <person name="Dougan G."/>
            <person name="Parkhill J."/>
        </authorList>
    </citation>
    <scope>NUCLEOTIDE SEQUENCE [LARGE SCALE GENOMIC DNA]</scope>
    <source>
        <strain>287/91 / NCTC 13346</strain>
    </source>
</reference>
<accession>B5RFJ4</accession>
<evidence type="ECO:0000255" key="1">
    <source>
        <dbReference type="HAMAP-Rule" id="MF_00443"/>
    </source>
</evidence>
<name>THIG_SALG2</name>
<feature type="chain" id="PRO_1000196894" description="Thiazole synthase">
    <location>
        <begin position="1"/>
        <end position="256"/>
    </location>
</feature>
<feature type="active site" description="Schiff-base intermediate with DXP" evidence="1">
    <location>
        <position position="95"/>
    </location>
</feature>
<feature type="binding site" evidence="1">
    <location>
        <position position="156"/>
    </location>
    <ligand>
        <name>1-deoxy-D-xylulose 5-phosphate</name>
        <dbReference type="ChEBI" id="CHEBI:57792"/>
    </ligand>
</feature>
<feature type="binding site" evidence="1">
    <location>
        <begin position="182"/>
        <end position="183"/>
    </location>
    <ligand>
        <name>1-deoxy-D-xylulose 5-phosphate</name>
        <dbReference type="ChEBI" id="CHEBI:57792"/>
    </ligand>
</feature>
<feature type="binding site" evidence="1">
    <location>
        <begin position="204"/>
        <end position="205"/>
    </location>
    <ligand>
        <name>1-deoxy-D-xylulose 5-phosphate</name>
        <dbReference type="ChEBI" id="CHEBI:57792"/>
    </ligand>
</feature>
<dbReference type="EC" id="2.8.1.10" evidence="1"/>
<dbReference type="EMBL" id="AM933173">
    <property type="protein sequence ID" value="CAR39237.1"/>
    <property type="molecule type" value="Genomic_DNA"/>
</dbReference>
<dbReference type="RefSeq" id="WP_000944083.1">
    <property type="nucleotide sequence ID" value="NC_011274.1"/>
</dbReference>
<dbReference type="SMR" id="B5RFJ4"/>
<dbReference type="KEGG" id="seg:SG3446"/>
<dbReference type="HOGENOM" id="CLU_062233_1_0_6"/>
<dbReference type="UniPathway" id="UPA00060"/>
<dbReference type="Proteomes" id="UP000008321">
    <property type="component" value="Chromosome"/>
</dbReference>
<dbReference type="GO" id="GO:0005737">
    <property type="term" value="C:cytoplasm"/>
    <property type="evidence" value="ECO:0007669"/>
    <property type="project" value="UniProtKB-SubCell"/>
</dbReference>
<dbReference type="GO" id="GO:1990107">
    <property type="term" value="F:thiazole synthase activity"/>
    <property type="evidence" value="ECO:0007669"/>
    <property type="project" value="UniProtKB-EC"/>
</dbReference>
<dbReference type="GO" id="GO:0009229">
    <property type="term" value="P:thiamine diphosphate biosynthetic process"/>
    <property type="evidence" value="ECO:0007669"/>
    <property type="project" value="UniProtKB-UniRule"/>
</dbReference>
<dbReference type="CDD" id="cd04728">
    <property type="entry name" value="ThiG"/>
    <property type="match status" value="1"/>
</dbReference>
<dbReference type="FunFam" id="3.20.20.70:FF:000049">
    <property type="entry name" value="Thiazole synthase"/>
    <property type="match status" value="1"/>
</dbReference>
<dbReference type="Gene3D" id="3.20.20.70">
    <property type="entry name" value="Aldolase class I"/>
    <property type="match status" value="1"/>
</dbReference>
<dbReference type="HAMAP" id="MF_00443">
    <property type="entry name" value="ThiG"/>
    <property type="match status" value="1"/>
</dbReference>
<dbReference type="InterPro" id="IPR013785">
    <property type="entry name" value="Aldolase_TIM"/>
</dbReference>
<dbReference type="InterPro" id="IPR033983">
    <property type="entry name" value="Thiazole_synthase_ThiG"/>
</dbReference>
<dbReference type="InterPro" id="IPR008867">
    <property type="entry name" value="ThiG"/>
</dbReference>
<dbReference type="PANTHER" id="PTHR34266">
    <property type="entry name" value="THIAZOLE SYNTHASE"/>
    <property type="match status" value="1"/>
</dbReference>
<dbReference type="PANTHER" id="PTHR34266:SF2">
    <property type="entry name" value="THIAZOLE SYNTHASE"/>
    <property type="match status" value="1"/>
</dbReference>
<dbReference type="Pfam" id="PF05690">
    <property type="entry name" value="ThiG"/>
    <property type="match status" value="1"/>
</dbReference>
<dbReference type="SUPFAM" id="SSF110399">
    <property type="entry name" value="ThiG-like"/>
    <property type="match status" value="1"/>
</dbReference>
<keyword id="KW-0963">Cytoplasm</keyword>
<keyword id="KW-0704">Schiff base</keyword>
<keyword id="KW-0784">Thiamine biosynthesis</keyword>
<keyword id="KW-0808">Transferase</keyword>
<organism>
    <name type="scientific">Salmonella gallinarum (strain 287/91 / NCTC 13346)</name>
    <dbReference type="NCBI Taxonomy" id="550538"/>
    <lineage>
        <taxon>Bacteria</taxon>
        <taxon>Pseudomonadati</taxon>
        <taxon>Pseudomonadota</taxon>
        <taxon>Gammaproteobacteria</taxon>
        <taxon>Enterobacterales</taxon>
        <taxon>Enterobacteriaceae</taxon>
        <taxon>Salmonella</taxon>
    </lineage>
</organism>
<proteinExistence type="inferred from homology"/>
<protein>
    <recommendedName>
        <fullName evidence="1">Thiazole synthase</fullName>
        <ecNumber evidence="1">2.8.1.10</ecNumber>
    </recommendedName>
</protein>